<protein>
    <recommendedName>
        <fullName evidence="1">Prefoldin subunit beta</fullName>
    </recommendedName>
    <alternativeName>
        <fullName evidence="1">GimC subunit beta</fullName>
    </alternativeName>
</protein>
<sequence length="125" mass="13806">MQGNLPPEAQEKLEQLQDLQEKAQNVATQKQQAEQQLSEAETALDALGDIEESTTMYREVGELLVETEYDNAHDDLDEKVSDLEVRVETLQKQEDRVQEQFESLQEELQDMLGGAGGAMGGGPGA</sequence>
<keyword id="KW-0143">Chaperone</keyword>
<keyword id="KW-0963">Cytoplasm</keyword>
<comment type="function">
    <text evidence="1">Molecular chaperone capable of stabilizing a range of proteins. Seems to fulfill an ATP-independent, HSP70-like function in archaeal de novo protein folding.</text>
</comment>
<comment type="subunit">
    <text evidence="1">Heterohexamer of two alpha and four beta subunits.</text>
</comment>
<comment type="subcellular location">
    <subcellularLocation>
        <location evidence="1">Cytoplasm</location>
    </subcellularLocation>
</comment>
<comment type="similarity">
    <text evidence="1">Belongs to the prefoldin subunit beta family.</text>
</comment>
<gene>
    <name evidence="1" type="primary">pfdB</name>
    <name type="ordered locus">OE_1371R</name>
</gene>
<name>PFDB_HALS3</name>
<accession>B0R2X8</accession>
<proteinExistence type="inferred from homology"/>
<organism>
    <name type="scientific">Halobacterium salinarum (strain ATCC 29341 / DSM 671 / R1)</name>
    <dbReference type="NCBI Taxonomy" id="478009"/>
    <lineage>
        <taxon>Archaea</taxon>
        <taxon>Methanobacteriati</taxon>
        <taxon>Methanobacteriota</taxon>
        <taxon>Stenosarchaea group</taxon>
        <taxon>Halobacteria</taxon>
        <taxon>Halobacteriales</taxon>
        <taxon>Halobacteriaceae</taxon>
        <taxon>Halobacterium</taxon>
        <taxon>Halobacterium salinarum NRC-34001</taxon>
    </lineage>
</organism>
<dbReference type="EMBL" id="AM774415">
    <property type="protein sequence ID" value="CAP13088.1"/>
    <property type="molecule type" value="Genomic_DNA"/>
</dbReference>
<dbReference type="RefSeq" id="WP_010902129.1">
    <property type="nucleotide sequence ID" value="NC_010364.1"/>
</dbReference>
<dbReference type="SMR" id="B0R2X8"/>
<dbReference type="EnsemblBacteria" id="CAP13088">
    <property type="protein sequence ID" value="CAP13088"/>
    <property type="gene ID" value="OE_1371R"/>
</dbReference>
<dbReference type="KEGG" id="hsl:OE_1371R"/>
<dbReference type="HOGENOM" id="CLU_131909_0_1_2"/>
<dbReference type="PhylomeDB" id="B0R2X8"/>
<dbReference type="Proteomes" id="UP000001321">
    <property type="component" value="Chromosome"/>
</dbReference>
<dbReference type="GO" id="GO:0005737">
    <property type="term" value="C:cytoplasm"/>
    <property type="evidence" value="ECO:0007669"/>
    <property type="project" value="UniProtKB-SubCell"/>
</dbReference>
<dbReference type="GO" id="GO:0016272">
    <property type="term" value="C:prefoldin complex"/>
    <property type="evidence" value="ECO:0007669"/>
    <property type="project" value="UniProtKB-UniRule"/>
</dbReference>
<dbReference type="GO" id="GO:0044183">
    <property type="term" value="F:protein folding chaperone"/>
    <property type="evidence" value="ECO:0007669"/>
    <property type="project" value="TreeGrafter"/>
</dbReference>
<dbReference type="GO" id="GO:0051082">
    <property type="term" value="F:unfolded protein binding"/>
    <property type="evidence" value="ECO:0007669"/>
    <property type="project" value="UniProtKB-UniRule"/>
</dbReference>
<dbReference type="CDD" id="cd23162">
    <property type="entry name" value="Prefoldin_beta_GimC"/>
    <property type="match status" value="1"/>
</dbReference>
<dbReference type="Gene3D" id="1.10.287.370">
    <property type="match status" value="1"/>
</dbReference>
<dbReference type="HAMAP" id="MF_00307">
    <property type="entry name" value="PfdB"/>
    <property type="match status" value="1"/>
</dbReference>
<dbReference type="InterPro" id="IPR002777">
    <property type="entry name" value="PFD_beta-like"/>
</dbReference>
<dbReference type="InterPro" id="IPR012713">
    <property type="entry name" value="PfdB"/>
</dbReference>
<dbReference type="InterPro" id="IPR009053">
    <property type="entry name" value="Prefoldin"/>
</dbReference>
<dbReference type="NCBIfam" id="TIGR02338">
    <property type="entry name" value="gimC_beta"/>
    <property type="match status" value="1"/>
</dbReference>
<dbReference type="PANTHER" id="PTHR20903:SF0">
    <property type="entry name" value="PREFOLDIN SUBUNIT 1"/>
    <property type="match status" value="1"/>
</dbReference>
<dbReference type="PANTHER" id="PTHR20903">
    <property type="entry name" value="PREFOLDIN SUBUNIT 1-RELATED"/>
    <property type="match status" value="1"/>
</dbReference>
<dbReference type="Pfam" id="PF01920">
    <property type="entry name" value="Prefoldin_2"/>
    <property type="match status" value="1"/>
</dbReference>
<dbReference type="SUPFAM" id="SSF46579">
    <property type="entry name" value="Prefoldin"/>
    <property type="match status" value="1"/>
</dbReference>
<reference key="1">
    <citation type="journal article" date="2008" name="Genomics">
        <title>Evolution in the laboratory: the genome of Halobacterium salinarum strain R1 compared to that of strain NRC-1.</title>
        <authorList>
            <person name="Pfeiffer F."/>
            <person name="Schuster S.C."/>
            <person name="Broicher A."/>
            <person name="Falb M."/>
            <person name="Palm P."/>
            <person name="Rodewald K."/>
            <person name="Ruepp A."/>
            <person name="Soppa J."/>
            <person name="Tittor J."/>
            <person name="Oesterhelt D."/>
        </authorList>
    </citation>
    <scope>NUCLEOTIDE SEQUENCE [LARGE SCALE GENOMIC DNA]</scope>
    <source>
        <strain>ATCC 29341 / DSM 671 / R1</strain>
    </source>
</reference>
<feature type="chain" id="PRO_1000115622" description="Prefoldin subunit beta">
    <location>
        <begin position="1"/>
        <end position="125"/>
    </location>
</feature>
<evidence type="ECO:0000255" key="1">
    <source>
        <dbReference type="HAMAP-Rule" id="MF_00307"/>
    </source>
</evidence>